<protein>
    <recommendedName>
        <fullName>Flagellar L-ring protein</fullName>
    </recommendedName>
    <alternativeName>
        <fullName>Basal body L-ring protein</fullName>
    </alternativeName>
</protein>
<gene>
    <name type="primary">flgH</name>
    <name type="ordered locus">SF1083</name>
    <name type="ordered locus">S1163</name>
</gene>
<reference key="1">
    <citation type="journal article" date="2002" name="Nucleic Acids Res.">
        <title>Genome sequence of Shigella flexneri 2a: insights into pathogenicity through comparison with genomes of Escherichia coli K12 and O157.</title>
        <authorList>
            <person name="Jin Q."/>
            <person name="Yuan Z."/>
            <person name="Xu J."/>
            <person name="Wang Y."/>
            <person name="Shen Y."/>
            <person name="Lu W."/>
            <person name="Wang J."/>
            <person name="Liu H."/>
            <person name="Yang J."/>
            <person name="Yang F."/>
            <person name="Zhang X."/>
            <person name="Zhang J."/>
            <person name="Yang G."/>
            <person name="Wu H."/>
            <person name="Qu D."/>
            <person name="Dong J."/>
            <person name="Sun L."/>
            <person name="Xue Y."/>
            <person name="Zhao A."/>
            <person name="Gao Y."/>
            <person name="Zhu J."/>
            <person name="Kan B."/>
            <person name="Ding K."/>
            <person name="Chen S."/>
            <person name="Cheng H."/>
            <person name="Yao Z."/>
            <person name="He B."/>
            <person name="Chen R."/>
            <person name="Ma D."/>
            <person name="Qiang B."/>
            <person name="Wen Y."/>
            <person name="Hou Y."/>
            <person name="Yu J."/>
        </authorList>
    </citation>
    <scope>NUCLEOTIDE SEQUENCE [LARGE SCALE GENOMIC DNA]</scope>
    <source>
        <strain>301 / Serotype 2a</strain>
    </source>
</reference>
<reference key="2">
    <citation type="journal article" date="2003" name="Infect. Immun.">
        <title>Complete genome sequence and comparative genomics of Shigella flexneri serotype 2a strain 2457T.</title>
        <authorList>
            <person name="Wei J."/>
            <person name="Goldberg M.B."/>
            <person name="Burland V."/>
            <person name="Venkatesan M.M."/>
            <person name="Deng W."/>
            <person name="Fournier G."/>
            <person name="Mayhew G.F."/>
            <person name="Plunkett G. III"/>
            <person name="Rose D.J."/>
            <person name="Darling A."/>
            <person name="Mau B."/>
            <person name="Perna N.T."/>
            <person name="Payne S.M."/>
            <person name="Runyen-Janecky L.J."/>
            <person name="Zhou S."/>
            <person name="Schwartz D.C."/>
            <person name="Blattner F.R."/>
        </authorList>
    </citation>
    <scope>NUCLEOTIDE SEQUENCE [LARGE SCALE GENOMIC DNA]</scope>
    <source>
        <strain>ATCC 700930 / 2457T / Serotype 2a</strain>
    </source>
</reference>
<accession>P0A6S2</accession>
<accession>P75940</accession>
<accession>Q9R7P0</accession>
<proteinExistence type="inferred from homology"/>
<dbReference type="EMBL" id="AE005674">
    <property type="protein sequence ID" value="AAN42704.2"/>
    <property type="molecule type" value="Genomic_DNA"/>
</dbReference>
<dbReference type="EMBL" id="AE014073">
    <property type="protein sequence ID" value="AAP16592.1"/>
    <property type="molecule type" value="Genomic_DNA"/>
</dbReference>
<dbReference type="RefSeq" id="NP_706997.2">
    <property type="nucleotide sequence ID" value="NC_004337.2"/>
</dbReference>
<dbReference type="RefSeq" id="WP_001295442.1">
    <property type="nucleotide sequence ID" value="NZ_WPGW01000001.1"/>
</dbReference>
<dbReference type="SMR" id="P0A6S2"/>
<dbReference type="STRING" id="198214.SF1083"/>
<dbReference type="PaxDb" id="198214-SF1083"/>
<dbReference type="DNASU" id="1077558"/>
<dbReference type="GeneID" id="1024037"/>
<dbReference type="GeneID" id="93776328"/>
<dbReference type="KEGG" id="sfl:SF1083"/>
<dbReference type="KEGG" id="sfx:S1163"/>
<dbReference type="PATRIC" id="fig|198214.7.peg.1270"/>
<dbReference type="HOGENOM" id="CLU_069313_0_0_6"/>
<dbReference type="Proteomes" id="UP000001006">
    <property type="component" value="Chromosome"/>
</dbReference>
<dbReference type="Proteomes" id="UP000002673">
    <property type="component" value="Chromosome"/>
</dbReference>
<dbReference type="GO" id="GO:0009427">
    <property type="term" value="C:bacterial-type flagellum basal body, distal rod, L ring"/>
    <property type="evidence" value="ECO:0007669"/>
    <property type="project" value="InterPro"/>
</dbReference>
<dbReference type="GO" id="GO:0009279">
    <property type="term" value="C:cell outer membrane"/>
    <property type="evidence" value="ECO:0007669"/>
    <property type="project" value="UniProtKB-SubCell"/>
</dbReference>
<dbReference type="GO" id="GO:0003774">
    <property type="term" value="F:cytoskeletal motor activity"/>
    <property type="evidence" value="ECO:0007669"/>
    <property type="project" value="InterPro"/>
</dbReference>
<dbReference type="GO" id="GO:0071973">
    <property type="term" value="P:bacterial-type flagellum-dependent cell motility"/>
    <property type="evidence" value="ECO:0007669"/>
    <property type="project" value="InterPro"/>
</dbReference>
<dbReference type="HAMAP" id="MF_00415">
    <property type="entry name" value="FlgH"/>
    <property type="match status" value="1"/>
</dbReference>
<dbReference type="InterPro" id="IPR000527">
    <property type="entry name" value="Flag_Lring"/>
</dbReference>
<dbReference type="NCBIfam" id="NF001301">
    <property type="entry name" value="PRK00249.1-1"/>
    <property type="match status" value="1"/>
</dbReference>
<dbReference type="PANTHER" id="PTHR34933">
    <property type="entry name" value="FLAGELLAR L-RING PROTEIN"/>
    <property type="match status" value="1"/>
</dbReference>
<dbReference type="PANTHER" id="PTHR34933:SF3">
    <property type="entry name" value="FLAGELLAR L-RING PROTEIN"/>
    <property type="match status" value="1"/>
</dbReference>
<dbReference type="Pfam" id="PF02107">
    <property type="entry name" value="FlgH"/>
    <property type="match status" value="1"/>
</dbReference>
<dbReference type="PRINTS" id="PR01008">
    <property type="entry name" value="FLGLRINGFLGH"/>
</dbReference>
<dbReference type="PROSITE" id="PS51257">
    <property type="entry name" value="PROKAR_LIPOPROTEIN"/>
    <property type="match status" value="1"/>
</dbReference>
<keyword id="KW-0975">Bacterial flagellum</keyword>
<keyword id="KW-0998">Cell outer membrane</keyword>
<keyword id="KW-0449">Lipoprotein</keyword>
<keyword id="KW-0472">Membrane</keyword>
<keyword id="KW-0564">Palmitate</keyword>
<keyword id="KW-1185">Reference proteome</keyword>
<keyword id="KW-0732">Signal</keyword>
<evidence type="ECO:0000250" key="1"/>
<evidence type="ECO:0000255" key="2"/>
<evidence type="ECO:0000305" key="3"/>
<name>FLGH_SHIFL</name>
<feature type="signal peptide" evidence="2">
    <location>
        <begin position="1"/>
        <end position="21"/>
    </location>
</feature>
<feature type="chain" id="PRO_0000009473" description="Flagellar L-ring protein">
    <location>
        <begin position="22"/>
        <end position="232"/>
    </location>
</feature>
<feature type="lipid moiety-binding region" description="N-palmitoyl cysteine" evidence="2">
    <location>
        <position position="22"/>
    </location>
</feature>
<feature type="lipid moiety-binding region" description="S-diacylglycerol cysteine" evidence="2">
    <location>
        <position position="22"/>
    </location>
</feature>
<organism>
    <name type="scientific">Shigella flexneri</name>
    <dbReference type="NCBI Taxonomy" id="623"/>
    <lineage>
        <taxon>Bacteria</taxon>
        <taxon>Pseudomonadati</taxon>
        <taxon>Pseudomonadota</taxon>
        <taxon>Gammaproteobacteria</taxon>
        <taxon>Enterobacterales</taxon>
        <taxon>Enterobacteriaceae</taxon>
        <taxon>Shigella</taxon>
    </lineage>
</organism>
<sequence>MQKNAAHTYAISSLLVLSLTGCAWIPSTPLVQGATSAQPVPGPTPVANGSIFQSAQPINYGYQPLFEDRRPRNIGDTLTIVLQENVSASKSSSANASRDGKTNFGFDTVPRYLQGLFGNARADVEASGGNTFNGKGGANASNTFSGTLTVTVDQVLVNGNLHVVGEKQIAINQGTEFIRFSGVVNPRTISGSNTVPSTQVADARIEYVGNGYINEAQNMGWLQRFFLNLSPM</sequence>
<comment type="function">
    <text evidence="1">Assembles around the rod to form the L-ring and probably protects the motor/basal body from shearing forces during rotation.</text>
</comment>
<comment type="subunit">
    <text evidence="1">The basal body constitutes a major portion of the flagellar organelle and consists of four rings (L,P,S, and M) mounted on a central rod.</text>
</comment>
<comment type="subcellular location">
    <subcellularLocation>
        <location evidence="1">Cell outer membrane</location>
        <topology evidence="1">Lipid-anchor</topology>
    </subcellularLocation>
    <subcellularLocation>
        <location evidence="1">Bacterial flagellum basal body</location>
    </subcellularLocation>
</comment>
<comment type="similarity">
    <text evidence="3">Belongs to the FlgH family.</text>
</comment>